<proteinExistence type="inferred from homology"/>
<sequence length="245" mass="27023">MSQVNMRDMLKAGVHFGHQTRYWNPKMGKYIFGARNKIHIVNLEKTLPMFNDALSFVERLAQGKNKILFVGTKRSAGKIVAEQAARCGSPYVDHRWLGGMLTNYKTIRASIKRLRDLETQAEDGTFAKLTKKEALMRSRDLEKLDRSLGGIKDMGGLPDALFVIDVDHERIAITEANKLGIPVIGVVDTNSSPEGVDYIIPGNDDAIRAIELYMTSMADAVIRGRNNVAGGTEVYAEEAAAPAAE</sequence>
<evidence type="ECO:0000255" key="1">
    <source>
        <dbReference type="HAMAP-Rule" id="MF_00291"/>
    </source>
</evidence>
<evidence type="ECO:0000305" key="2"/>
<organism>
    <name type="scientific">Pseudomonas putida (strain ATCC 47054 / DSM 6125 / CFBP 8728 / NCIMB 11950 / KT2440)</name>
    <dbReference type="NCBI Taxonomy" id="160488"/>
    <lineage>
        <taxon>Bacteria</taxon>
        <taxon>Pseudomonadati</taxon>
        <taxon>Pseudomonadota</taxon>
        <taxon>Gammaproteobacteria</taxon>
        <taxon>Pseudomonadales</taxon>
        <taxon>Pseudomonadaceae</taxon>
        <taxon>Pseudomonas</taxon>
    </lineage>
</organism>
<name>RS2_PSEPK</name>
<accession>Q88MI0</accession>
<dbReference type="EMBL" id="AE015451">
    <property type="protein sequence ID" value="AAN67212.1"/>
    <property type="molecule type" value="Genomic_DNA"/>
</dbReference>
<dbReference type="RefSeq" id="NP_743748.1">
    <property type="nucleotide sequence ID" value="NC_002947.4"/>
</dbReference>
<dbReference type="RefSeq" id="WP_003252287.1">
    <property type="nucleotide sequence ID" value="NZ_CP169744.1"/>
</dbReference>
<dbReference type="SMR" id="Q88MI0"/>
<dbReference type="STRING" id="160488.PP_1591"/>
<dbReference type="PaxDb" id="160488-PP_1591"/>
<dbReference type="GeneID" id="97166656"/>
<dbReference type="KEGG" id="ppu:PP_1591"/>
<dbReference type="PATRIC" id="fig|160488.4.peg.1682"/>
<dbReference type="eggNOG" id="COG0052">
    <property type="taxonomic scope" value="Bacteria"/>
</dbReference>
<dbReference type="HOGENOM" id="CLU_040318_1_0_6"/>
<dbReference type="OrthoDB" id="9808036at2"/>
<dbReference type="PhylomeDB" id="Q88MI0"/>
<dbReference type="BioCyc" id="PPUT160488:G1G01-1688-MONOMER"/>
<dbReference type="Proteomes" id="UP000000556">
    <property type="component" value="Chromosome"/>
</dbReference>
<dbReference type="GO" id="GO:0022627">
    <property type="term" value="C:cytosolic small ribosomal subunit"/>
    <property type="evidence" value="ECO:0007669"/>
    <property type="project" value="TreeGrafter"/>
</dbReference>
<dbReference type="GO" id="GO:0003735">
    <property type="term" value="F:structural constituent of ribosome"/>
    <property type="evidence" value="ECO:0007669"/>
    <property type="project" value="InterPro"/>
</dbReference>
<dbReference type="GO" id="GO:0006412">
    <property type="term" value="P:translation"/>
    <property type="evidence" value="ECO:0007669"/>
    <property type="project" value="UniProtKB-UniRule"/>
</dbReference>
<dbReference type="CDD" id="cd01425">
    <property type="entry name" value="RPS2"/>
    <property type="match status" value="1"/>
</dbReference>
<dbReference type="FunFam" id="1.10.287.610:FF:000001">
    <property type="entry name" value="30S ribosomal protein S2"/>
    <property type="match status" value="1"/>
</dbReference>
<dbReference type="Gene3D" id="3.40.50.10490">
    <property type="entry name" value="Glucose-6-phosphate isomerase like protein, domain 1"/>
    <property type="match status" value="1"/>
</dbReference>
<dbReference type="Gene3D" id="1.10.287.610">
    <property type="entry name" value="Helix hairpin bin"/>
    <property type="match status" value="1"/>
</dbReference>
<dbReference type="HAMAP" id="MF_00291_B">
    <property type="entry name" value="Ribosomal_uS2_B"/>
    <property type="match status" value="1"/>
</dbReference>
<dbReference type="InterPro" id="IPR001865">
    <property type="entry name" value="Ribosomal_uS2"/>
</dbReference>
<dbReference type="InterPro" id="IPR005706">
    <property type="entry name" value="Ribosomal_uS2_bac/mit/plastid"/>
</dbReference>
<dbReference type="InterPro" id="IPR018130">
    <property type="entry name" value="Ribosomal_uS2_CS"/>
</dbReference>
<dbReference type="InterPro" id="IPR023591">
    <property type="entry name" value="Ribosomal_uS2_flav_dom_sf"/>
</dbReference>
<dbReference type="NCBIfam" id="TIGR01011">
    <property type="entry name" value="rpsB_bact"/>
    <property type="match status" value="1"/>
</dbReference>
<dbReference type="PANTHER" id="PTHR12534">
    <property type="entry name" value="30S RIBOSOMAL PROTEIN S2 PROKARYOTIC AND ORGANELLAR"/>
    <property type="match status" value="1"/>
</dbReference>
<dbReference type="PANTHER" id="PTHR12534:SF0">
    <property type="entry name" value="SMALL RIBOSOMAL SUBUNIT PROTEIN US2M"/>
    <property type="match status" value="1"/>
</dbReference>
<dbReference type="Pfam" id="PF00318">
    <property type="entry name" value="Ribosomal_S2"/>
    <property type="match status" value="1"/>
</dbReference>
<dbReference type="PRINTS" id="PR00395">
    <property type="entry name" value="RIBOSOMALS2"/>
</dbReference>
<dbReference type="SUPFAM" id="SSF52313">
    <property type="entry name" value="Ribosomal protein S2"/>
    <property type="match status" value="1"/>
</dbReference>
<dbReference type="PROSITE" id="PS00962">
    <property type="entry name" value="RIBOSOMAL_S2_1"/>
    <property type="match status" value="1"/>
</dbReference>
<dbReference type="PROSITE" id="PS00963">
    <property type="entry name" value="RIBOSOMAL_S2_2"/>
    <property type="match status" value="1"/>
</dbReference>
<keyword id="KW-1185">Reference proteome</keyword>
<keyword id="KW-0687">Ribonucleoprotein</keyword>
<keyword id="KW-0689">Ribosomal protein</keyword>
<gene>
    <name evidence="1" type="primary">rpsB</name>
    <name type="ordered locus">PP_1591</name>
</gene>
<feature type="chain" id="PRO_0000134221" description="Small ribosomal subunit protein uS2">
    <location>
        <begin position="1"/>
        <end position="245"/>
    </location>
</feature>
<comment type="similarity">
    <text evidence="1">Belongs to the universal ribosomal protein uS2 family.</text>
</comment>
<protein>
    <recommendedName>
        <fullName evidence="1">Small ribosomal subunit protein uS2</fullName>
    </recommendedName>
    <alternativeName>
        <fullName evidence="2">30S ribosomal protein S2</fullName>
    </alternativeName>
</protein>
<reference key="1">
    <citation type="journal article" date="2002" name="Environ. Microbiol.">
        <title>Complete genome sequence and comparative analysis of the metabolically versatile Pseudomonas putida KT2440.</title>
        <authorList>
            <person name="Nelson K.E."/>
            <person name="Weinel C."/>
            <person name="Paulsen I.T."/>
            <person name="Dodson R.J."/>
            <person name="Hilbert H."/>
            <person name="Martins dos Santos V.A.P."/>
            <person name="Fouts D.E."/>
            <person name="Gill S.R."/>
            <person name="Pop M."/>
            <person name="Holmes M."/>
            <person name="Brinkac L.M."/>
            <person name="Beanan M.J."/>
            <person name="DeBoy R.T."/>
            <person name="Daugherty S.C."/>
            <person name="Kolonay J.F."/>
            <person name="Madupu R."/>
            <person name="Nelson W.C."/>
            <person name="White O."/>
            <person name="Peterson J.D."/>
            <person name="Khouri H.M."/>
            <person name="Hance I."/>
            <person name="Chris Lee P."/>
            <person name="Holtzapple E.K."/>
            <person name="Scanlan D."/>
            <person name="Tran K."/>
            <person name="Moazzez A."/>
            <person name="Utterback T.R."/>
            <person name="Rizzo M."/>
            <person name="Lee K."/>
            <person name="Kosack D."/>
            <person name="Moestl D."/>
            <person name="Wedler H."/>
            <person name="Lauber J."/>
            <person name="Stjepandic D."/>
            <person name="Hoheisel J."/>
            <person name="Straetz M."/>
            <person name="Heim S."/>
            <person name="Kiewitz C."/>
            <person name="Eisen J.A."/>
            <person name="Timmis K.N."/>
            <person name="Duesterhoeft A."/>
            <person name="Tuemmler B."/>
            <person name="Fraser C.M."/>
        </authorList>
    </citation>
    <scope>NUCLEOTIDE SEQUENCE [LARGE SCALE GENOMIC DNA]</scope>
    <source>
        <strain>ATCC 47054 / DSM 6125 / CFBP 8728 / NCIMB 11950 / KT2440</strain>
    </source>
</reference>